<name>YBEY_GEOKA</name>
<comment type="function">
    <text evidence="1">Single strand-specific metallo-endoribonuclease involved in late-stage 70S ribosome quality control and in maturation of the 3' terminus of the 16S rRNA.</text>
</comment>
<comment type="cofactor">
    <cofactor evidence="1">
        <name>Zn(2+)</name>
        <dbReference type="ChEBI" id="CHEBI:29105"/>
    </cofactor>
    <text evidence="1">Binds 1 zinc ion.</text>
</comment>
<comment type="subcellular location">
    <subcellularLocation>
        <location evidence="1">Cytoplasm</location>
    </subcellularLocation>
</comment>
<comment type="similarity">
    <text evidence="1">Belongs to the endoribonuclease YbeY family.</text>
</comment>
<accession>Q5KX10</accession>
<evidence type="ECO:0000255" key="1">
    <source>
        <dbReference type="HAMAP-Rule" id="MF_00009"/>
    </source>
</evidence>
<protein>
    <recommendedName>
        <fullName evidence="1">Endoribonuclease YbeY</fullName>
        <ecNumber evidence="1">3.1.-.-</ecNumber>
    </recommendedName>
</protein>
<gene>
    <name evidence="1" type="primary">ybeY</name>
    <name type="ordered locus">GK2491</name>
</gene>
<organism>
    <name type="scientific">Geobacillus kaustophilus (strain HTA426)</name>
    <dbReference type="NCBI Taxonomy" id="235909"/>
    <lineage>
        <taxon>Bacteria</taxon>
        <taxon>Bacillati</taxon>
        <taxon>Bacillota</taxon>
        <taxon>Bacilli</taxon>
        <taxon>Bacillales</taxon>
        <taxon>Anoxybacillaceae</taxon>
        <taxon>Geobacillus</taxon>
        <taxon>Geobacillus thermoleovorans group</taxon>
    </lineage>
</organism>
<feature type="chain" id="PRO_0000102458" description="Endoribonuclease YbeY">
    <location>
        <begin position="1"/>
        <end position="156"/>
    </location>
</feature>
<feature type="binding site" evidence="1">
    <location>
        <position position="122"/>
    </location>
    <ligand>
        <name>Zn(2+)</name>
        <dbReference type="ChEBI" id="CHEBI:29105"/>
        <note>catalytic</note>
    </ligand>
</feature>
<feature type="binding site" evidence="1">
    <location>
        <position position="126"/>
    </location>
    <ligand>
        <name>Zn(2+)</name>
        <dbReference type="ChEBI" id="CHEBI:29105"/>
        <note>catalytic</note>
    </ligand>
</feature>
<feature type="binding site" evidence="1">
    <location>
        <position position="132"/>
    </location>
    <ligand>
        <name>Zn(2+)</name>
        <dbReference type="ChEBI" id="CHEBI:29105"/>
        <note>catalytic</note>
    </ligand>
</feature>
<sequence length="156" mass="17414">MTIHIDFLDETNEVTAEQIETIERLLAEAAALENVPDGAEVSVTFVDNERIRAMNRDYRGKDAPTDVLSFALEEEGEEEVHIVGADMPPVLGDIVISIPKAKEQAAAYGHSFMRELGFLAVHGFLHLLGYDHGTEEEERVMFAKQEDILARFGLTR</sequence>
<keyword id="KW-0963">Cytoplasm</keyword>
<keyword id="KW-0255">Endonuclease</keyword>
<keyword id="KW-0378">Hydrolase</keyword>
<keyword id="KW-0479">Metal-binding</keyword>
<keyword id="KW-0540">Nuclease</keyword>
<keyword id="KW-1185">Reference proteome</keyword>
<keyword id="KW-0690">Ribosome biogenesis</keyword>
<keyword id="KW-0698">rRNA processing</keyword>
<keyword id="KW-0862">Zinc</keyword>
<proteinExistence type="inferred from homology"/>
<reference key="1">
    <citation type="journal article" date="2004" name="Nucleic Acids Res.">
        <title>Thermoadaptation trait revealed by the genome sequence of thermophilic Geobacillus kaustophilus.</title>
        <authorList>
            <person name="Takami H."/>
            <person name="Takaki Y."/>
            <person name="Chee G.-J."/>
            <person name="Nishi S."/>
            <person name="Shimamura S."/>
            <person name="Suzuki H."/>
            <person name="Matsui S."/>
            <person name="Uchiyama I."/>
        </authorList>
    </citation>
    <scope>NUCLEOTIDE SEQUENCE [LARGE SCALE GENOMIC DNA]</scope>
    <source>
        <strain>HTA426</strain>
    </source>
</reference>
<dbReference type="EC" id="3.1.-.-" evidence="1"/>
<dbReference type="EMBL" id="BA000043">
    <property type="protein sequence ID" value="BAD76776.1"/>
    <property type="molecule type" value="Genomic_DNA"/>
</dbReference>
<dbReference type="RefSeq" id="WP_011231971.1">
    <property type="nucleotide sequence ID" value="NC_006510.1"/>
</dbReference>
<dbReference type="SMR" id="Q5KX10"/>
<dbReference type="STRING" id="235909.GK2491"/>
<dbReference type="GeneID" id="32064372"/>
<dbReference type="KEGG" id="gka:GK2491"/>
<dbReference type="eggNOG" id="COG0319">
    <property type="taxonomic scope" value="Bacteria"/>
</dbReference>
<dbReference type="HOGENOM" id="CLU_106710_3_0_9"/>
<dbReference type="Proteomes" id="UP000001172">
    <property type="component" value="Chromosome"/>
</dbReference>
<dbReference type="GO" id="GO:0005737">
    <property type="term" value="C:cytoplasm"/>
    <property type="evidence" value="ECO:0007669"/>
    <property type="project" value="UniProtKB-SubCell"/>
</dbReference>
<dbReference type="GO" id="GO:0004222">
    <property type="term" value="F:metalloendopeptidase activity"/>
    <property type="evidence" value="ECO:0007669"/>
    <property type="project" value="InterPro"/>
</dbReference>
<dbReference type="GO" id="GO:0004521">
    <property type="term" value="F:RNA endonuclease activity"/>
    <property type="evidence" value="ECO:0007669"/>
    <property type="project" value="UniProtKB-UniRule"/>
</dbReference>
<dbReference type="GO" id="GO:0008270">
    <property type="term" value="F:zinc ion binding"/>
    <property type="evidence" value="ECO:0007669"/>
    <property type="project" value="UniProtKB-UniRule"/>
</dbReference>
<dbReference type="GO" id="GO:0006364">
    <property type="term" value="P:rRNA processing"/>
    <property type="evidence" value="ECO:0007669"/>
    <property type="project" value="UniProtKB-UniRule"/>
</dbReference>
<dbReference type="Gene3D" id="3.40.390.30">
    <property type="entry name" value="Metalloproteases ('zincins'), catalytic domain"/>
    <property type="match status" value="1"/>
</dbReference>
<dbReference type="HAMAP" id="MF_00009">
    <property type="entry name" value="Endoribonucl_YbeY"/>
    <property type="match status" value="1"/>
</dbReference>
<dbReference type="InterPro" id="IPR023091">
    <property type="entry name" value="MetalPrtase_cat_dom_sf_prd"/>
</dbReference>
<dbReference type="InterPro" id="IPR002036">
    <property type="entry name" value="YbeY"/>
</dbReference>
<dbReference type="InterPro" id="IPR020549">
    <property type="entry name" value="YbeY_CS"/>
</dbReference>
<dbReference type="NCBIfam" id="TIGR00043">
    <property type="entry name" value="rRNA maturation RNase YbeY"/>
    <property type="match status" value="1"/>
</dbReference>
<dbReference type="PANTHER" id="PTHR46986">
    <property type="entry name" value="ENDORIBONUCLEASE YBEY, CHLOROPLASTIC"/>
    <property type="match status" value="1"/>
</dbReference>
<dbReference type="PANTHER" id="PTHR46986:SF1">
    <property type="entry name" value="ENDORIBONUCLEASE YBEY, CHLOROPLASTIC"/>
    <property type="match status" value="1"/>
</dbReference>
<dbReference type="Pfam" id="PF02130">
    <property type="entry name" value="YbeY"/>
    <property type="match status" value="1"/>
</dbReference>
<dbReference type="SUPFAM" id="SSF55486">
    <property type="entry name" value="Metalloproteases ('zincins'), catalytic domain"/>
    <property type="match status" value="1"/>
</dbReference>
<dbReference type="PROSITE" id="PS01306">
    <property type="entry name" value="UPF0054"/>
    <property type="match status" value="1"/>
</dbReference>